<name>RR17_MAIZE</name>
<feature type="transit peptide" description="Chloroplast" evidence="2">
    <location>
        <begin position="1"/>
        <end position="31"/>
    </location>
</feature>
<feature type="chain" id="PRO_0000232625" description="Small ribosomal subunit protein uS17c">
    <location>
        <begin position="32"/>
        <end position="132"/>
    </location>
</feature>
<feature type="region of interest" description="Disordered" evidence="3">
    <location>
        <begin position="1"/>
        <end position="23"/>
    </location>
</feature>
<feature type="region of interest" description="Disordered" evidence="3">
    <location>
        <begin position="104"/>
        <end position="132"/>
    </location>
</feature>
<feature type="compositionally biased region" description="Low complexity" evidence="3">
    <location>
        <begin position="1"/>
        <end position="11"/>
    </location>
</feature>
<feature type="compositionally biased region" description="Acidic residues" evidence="3">
    <location>
        <begin position="122"/>
        <end position="132"/>
    </location>
</feature>
<gene>
    <name type="primary">RPS17</name>
    <name type="synonym">HCF60</name>
</gene>
<dbReference type="EMBL" id="Y19204">
    <property type="protein sequence ID" value="CAB55608.1"/>
    <property type="molecule type" value="mRNA"/>
</dbReference>
<dbReference type="RefSeq" id="NP_001105494.1">
    <property type="nucleotide sequence ID" value="NM_001112024.3"/>
</dbReference>
<dbReference type="SMR" id="Q9TJN6"/>
<dbReference type="FunCoup" id="Q9TJN6">
    <property type="interactions" value="491"/>
</dbReference>
<dbReference type="STRING" id="4577.Q9TJN6"/>
<dbReference type="PaxDb" id="4577-GRMZM2G038013_P01"/>
<dbReference type="EnsemblPlants" id="Zm00001eb367450_T001">
    <property type="protein sequence ID" value="Zm00001eb367450_P001"/>
    <property type="gene ID" value="Zm00001eb367450"/>
</dbReference>
<dbReference type="GeneID" id="542469"/>
<dbReference type="Gramene" id="Zm00001eb367450_T001">
    <property type="protein sequence ID" value="Zm00001eb367450_P001"/>
    <property type="gene ID" value="Zm00001eb367450"/>
</dbReference>
<dbReference type="KEGG" id="zma:542469"/>
<dbReference type="MaizeGDB" id="272820"/>
<dbReference type="eggNOG" id="KOG1740">
    <property type="taxonomic scope" value="Eukaryota"/>
</dbReference>
<dbReference type="InParanoid" id="Q9TJN6"/>
<dbReference type="OMA" id="HANAPMS"/>
<dbReference type="OrthoDB" id="274752at2759"/>
<dbReference type="Proteomes" id="UP000007305">
    <property type="component" value="Chromosome 8"/>
</dbReference>
<dbReference type="ExpressionAtlas" id="Q9TJN6">
    <property type="expression patterns" value="baseline and differential"/>
</dbReference>
<dbReference type="GO" id="GO:0009507">
    <property type="term" value="C:chloroplast"/>
    <property type="evidence" value="ECO:0007669"/>
    <property type="project" value="UniProtKB-SubCell"/>
</dbReference>
<dbReference type="GO" id="GO:1990904">
    <property type="term" value="C:ribonucleoprotein complex"/>
    <property type="evidence" value="ECO:0007669"/>
    <property type="project" value="UniProtKB-KW"/>
</dbReference>
<dbReference type="GO" id="GO:0005840">
    <property type="term" value="C:ribosome"/>
    <property type="evidence" value="ECO:0007669"/>
    <property type="project" value="UniProtKB-KW"/>
</dbReference>
<dbReference type="GO" id="GO:0019843">
    <property type="term" value="F:rRNA binding"/>
    <property type="evidence" value="ECO:0007669"/>
    <property type="project" value="UniProtKB-KW"/>
</dbReference>
<dbReference type="GO" id="GO:0003735">
    <property type="term" value="F:structural constituent of ribosome"/>
    <property type="evidence" value="ECO:0000318"/>
    <property type="project" value="GO_Central"/>
</dbReference>
<dbReference type="GO" id="GO:0006412">
    <property type="term" value="P:translation"/>
    <property type="evidence" value="ECO:0007669"/>
    <property type="project" value="InterPro"/>
</dbReference>
<dbReference type="CDD" id="cd00364">
    <property type="entry name" value="Ribosomal_uS17"/>
    <property type="match status" value="1"/>
</dbReference>
<dbReference type="FunFam" id="2.40.50.140:FF:000265">
    <property type="entry name" value="30S ribosomal protein S17, chloroplastic"/>
    <property type="match status" value="1"/>
</dbReference>
<dbReference type="Gene3D" id="2.40.50.140">
    <property type="entry name" value="Nucleic acid-binding proteins"/>
    <property type="match status" value="1"/>
</dbReference>
<dbReference type="HAMAP" id="MF_01345_B">
    <property type="entry name" value="Ribosomal_uS17_B"/>
    <property type="match status" value="1"/>
</dbReference>
<dbReference type="InterPro" id="IPR012340">
    <property type="entry name" value="NA-bd_OB-fold"/>
</dbReference>
<dbReference type="InterPro" id="IPR000266">
    <property type="entry name" value="Ribosomal_uS17"/>
</dbReference>
<dbReference type="InterPro" id="IPR019984">
    <property type="entry name" value="Ribosomal_uS17_bact/chlr"/>
</dbReference>
<dbReference type="NCBIfam" id="NF004123">
    <property type="entry name" value="PRK05610.1"/>
    <property type="match status" value="1"/>
</dbReference>
<dbReference type="PANTHER" id="PTHR10744">
    <property type="entry name" value="40S RIBOSOMAL PROTEIN S11 FAMILY MEMBER"/>
    <property type="match status" value="1"/>
</dbReference>
<dbReference type="PANTHER" id="PTHR10744:SF7">
    <property type="entry name" value="SMALL RIBOSOMAL SUBUNIT PROTEIN US17C"/>
    <property type="match status" value="1"/>
</dbReference>
<dbReference type="Pfam" id="PF00366">
    <property type="entry name" value="Ribosomal_S17"/>
    <property type="match status" value="1"/>
</dbReference>
<dbReference type="PRINTS" id="PR00973">
    <property type="entry name" value="RIBOSOMALS17"/>
</dbReference>
<dbReference type="SUPFAM" id="SSF50249">
    <property type="entry name" value="Nucleic acid-binding proteins"/>
    <property type="match status" value="1"/>
</dbReference>
<keyword id="KW-0150">Chloroplast</keyword>
<keyword id="KW-0934">Plastid</keyword>
<keyword id="KW-1185">Reference proteome</keyword>
<keyword id="KW-0687">Ribonucleoprotein</keyword>
<keyword id="KW-0689">Ribosomal protein</keyword>
<keyword id="KW-0694">RNA-binding</keyword>
<keyword id="KW-0699">rRNA-binding</keyword>
<keyword id="KW-0809">Transit peptide</keyword>
<evidence type="ECO:0000250" key="1"/>
<evidence type="ECO:0000255" key="2"/>
<evidence type="ECO:0000256" key="3">
    <source>
        <dbReference type="SAM" id="MobiDB-lite"/>
    </source>
</evidence>
<evidence type="ECO:0000305" key="4"/>
<reference key="1">
    <citation type="journal article" date="2000" name="Plant J.">
        <title>Maize high chlorophyll fluorescent 60 is caused by an Ac disruption of the gene encoding the chloroplast ribosomal small subunit protein 17.</title>
        <authorList>
            <person name="Schultes N.P."/>
            <person name="Sawers R.J.H."/>
            <person name="Brutnell T.P."/>
            <person name="Kreuger R.W."/>
        </authorList>
    </citation>
    <scope>NUCLEOTIDE SEQUENCE [MRNA]</scope>
    <scope>EFFECT ON PHYSIOLOGY</scope>
    <source>
        <tissue>Seedling</tissue>
    </source>
</reference>
<sequence>MLLLSSPFVSVSPPPPPLSSHGARPALRIEAARQLTGRVVTTKADKTVGVEVVRLAPHPKYKRRERIKKKYQAHDPDNQFKVGDVVELQPSRPISKTKHFLAIPLPPRDTRRKSQLLPPLQSDDDQEPSSRE</sequence>
<accession>Q9TJN6</accession>
<protein>
    <recommendedName>
        <fullName evidence="4">Small ribosomal subunit protein uS17c</fullName>
    </recommendedName>
    <alternativeName>
        <fullName>30S ribosomal protein S17, chloroplastic</fullName>
    </alternativeName>
</protein>
<comment type="function">
    <text evidence="1">One of the primary rRNA binding proteins, it binds specifically to the 5'-end of 16S ribosomal RNA.</text>
</comment>
<comment type="function">
    <text>In the hcf60 mutation the Activator tag is inserted 17 base pars upstream of the initiation codon. This mutation is seedling lethal, due to plastid ribosome insufficiency. However under non-light stressed conditions photosynthesis and oxygen evolution can occur.</text>
</comment>
<comment type="subunit">
    <text>Part of the 30S ribosomal subunit.</text>
</comment>
<comment type="subcellular location">
    <subcellularLocation>
        <location evidence="4">Plastid</location>
        <location evidence="4">Chloroplast</location>
    </subcellularLocation>
</comment>
<comment type="similarity">
    <text evidence="4">Belongs to the universal ribosomal protein uS17 family.</text>
</comment>
<proteinExistence type="evidence at transcript level"/>
<organism>
    <name type="scientific">Zea mays</name>
    <name type="common">Maize</name>
    <dbReference type="NCBI Taxonomy" id="4577"/>
    <lineage>
        <taxon>Eukaryota</taxon>
        <taxon>Viridiplantae</taxon>
        <taxon>Streptophyta</taxon>
        <taxon>Embryophyta</taxon>
        <taxon>Tracheophyta</taxon>
        <taxon>Spermatophyta</taxon>
        <taxon>Magnoliopsida</taxon>
        <taxon>Liliopsida</taxon>
        <taxon>Poales</taxon>
        <taxon>Poaceae</taxon>
        <taxon>PACMAD clade</taxon>
        <taxon>Panicoideae</taxon>
        <taxon>Andropogonodae</taxon>
        <taxon>Andropogoneae</taxon>
        <taxon>Tripsacinae</taxon>
        <taxon>Zea</taxon>
    </lineage>
</organism>